<gene>
    <name evidence="1" type="primary">fbp1</name>
    <name type="ordered locus">Bxeno_A3487</name>
    <name type="ORF">Bxe_A0920</name>
</gene>
<keyword id="KW-0119">Carbohydrate metabolism</keyword>
<keyword id="KW-0963">Cytoplasm</keyword>
<keyword id="KW-0378">Hydrolase</keyword>
<keyword id="KW-0460">Magnesium</keyword>
<keyword id="KW-0479">Metal-binding</keyword>
<keyword id="KW-1185">Reference proteome</keyword>
<comment type="catalytic activity">
    <reaction evidence="1">
        <text>beta-D-fructose 1,6-bisphosphate + H2O = beta-D-fructose 6-phosphate + phosphate</text>
        <dbReference type="Rhea" id="RHEA:11064"/>
        <dbReference type="ChEBI" id="CHEBI:15377"/>
        <dbReference type="ChEBI" id="CHEBI:32966"/>
        <dbReference type="ChEBI" id="CHEBI:43474"/>
        <dbReference type="ChEBI" id="CHEBI:57634"/>
        <dbReference type="EC" id="3.1.3.11"/>
    </reaction>
</comment>
<comment type="cofactor">
    <cofactor evidence="1">
        <name>Mg(2+)</name>
        <dbReference type="ChEBI" id="CHEBI:18420"/>
    </cofactor>
    <text evidence="1">Binds 2 magnesium ions per subunit.</text>
</comment>
<comment type="pathway">
    <text evidence="1">Carbohydrate biosynthesis; gluconeogenesis.</text>
</comment>
<comment type="subunit">
    <text evidence="1">Homotetramer.</text>
</comment>
<comment type="subcellular location">
    <subcellularLocation>
        <location evidence="1">Cytoplasm</location>
    </subcellularLocation>
</comment>
<comment type="similarity">
    <text evidence="1">Belongs to the FBPase class 1 family.</text>
</comment>
<evidence type="ECO:0000255" key="1">
    <source>
        <dbReference type="HAMAP-Rule" id="MF_01855"/>
    </source>
</evidence>
<accession>Q13V64</accession>
<organism>
    <name type="scientific">Paraburkholderia xenovorans (strain LB400)</name>
    <dbReference type="NCBI Taxonomy" id="266265"/>
    <lineage>
        <taxon>Bacteria</taxon>
        <taxon>Pseudomonadati</taxon>
        <taxon>Pseudomonadota</taxon>
        <taxon>Betaproteobacteria</taxon>
        <taxon>Burkholderiales</taxon>
        <taxon>Burkholderiaceae</taxon>
        <taxon>Paraburkholderia</taxon>
    </lineage>
</organism>
<sequence>MALQRRTTLTKYLIEQQRETNNLPADLRLLIEVVARACKAISYHVSKGALGDALGTAGSENVQGEVQKKLDILSNEILLEANEWGGNLAGMASEEMEQFFPIPANYPKGEYLLVFDPLDGSSNIDVNVSIGTIFSVLRCPDGQQPTEQSFLQPGTQQVAAGYAVYGPQTVLVLTTGNGVNCFTLDRELGSWVLTQSDMRIPVETREYAINASNERHWYPPVQQYIGELKDGKEGSRQSDFNMRWIASMVADVHRILNRGGIFMYPADKRTPDKPGKLRLMYEANPMAFIVEQAGGAATNGEKRILDIQPKSLHERVAVFLGSKNEVDRVTRYHLETKK</sequence>
<reference key="1">
    <citation type="journal article" date="2006" name="Proc. Natl. Acad. Sci. U.S.A.">
        <title>Burkholderia xenovorans LB400 harbors a multi-replicon, 9.73-Mbp genome shaped for versatility.</title>
        <authorList>
            <person name="Chain P.S.G."/>
            <person name="Denef V.J."/>
            <person name="Konstantinidis K.T."/>
            <person name="Vergez L.M."/>
            <person name="Agullo L."/>
            <person name="Reyes V.L."/>
            <person name="Hauser L."/>
            <person name="Cordova M."/>
            <person name="Gomez L."/>
            <person name="Gonzalez M."/>
            <person name="Land M."/>
            <person name="Lao V."/>
            <person name="Larimer F."/>
            <person name="LiPuma J.J."/>
            <person name="Mahenthiralingam E."/>
            <person name="Malfatti S.A."/>
            <person name="Marx C.J."/>
            <person name="Parnell J.J."/>
            <person name="Ramette A."/>
            <person name="Richardson P."/>
            <person name="Seeger M."/>
            <person name="Smith D."/>
            <person name="Spilker T."/>
            <person name="Sul W.J."/>
            <person name="Tsoi T.V."/>
            <person name="Ulrich L.E."/>
            <person name="Zhulin I.B."/>
            <person name="Tiedje J.M."/>
        </authorList>
    </citation>
    <scope>NUCLEOTIDE SEQUENCE [LARGE SCALE GENOMIC DNA]</scope>
    <source>
        <strain>LB400</strain>
    </source>
</reference>
<name>F16A1_PARXL</name>
<dbReference type="EC" id="3.1.3.11" evidence="1"/>
<dbReference type="EMBL" id="CP000270">
    <property type="protein sequence ID" value="ABE32025.1"/>
    <property type="molecule type" value="Genomic_DNA"/>
</dbReference>
<dbReference type="RefSeq" id="WP_007180818.1">
    <property type="nucleotide sequence ID" value="NZ_CP008760.1"/>
</dbReference>
<dbReference type="SMR" id="Q13V64"/>
<dbReference type="STRING" id="266265.Bxe_A0920"/>
<dbReference type="KEGG" id="bxb:DR64_3083"/>
<dbReference type="KEGG" id="bxe:Bxe_A0920"/>
<dbReference type="eggNOG" id="COG0158">
    <property type="taxonomic scope" value="Bacteria"/>
</dbReference>
<dbReference type="OrthoDB" id="9806756at2"/>
<dbReference type="UniPathway" id="UPA00138"/>
<dbReference type="Proteomes" id="UP000001817">
    <property type="component" value="Chromosome 1"/>
</dbReference>
<dbReference type="GO" id="GO:0005829">
    <property type="term" value="C:cytosol"/>
    <property type="evidence" value="ECO:0007669"/>
    <property type="project" value="TreeGrafter"/>
</dbReference>
<dbReference type="GO" id="GO:0042132">
    <property type="term" value="F:fructose 1,6-bisphosphate 1-phosphatase activity"/>
    <property type="evidence" value="ECO:0007669"/>
    <property type="project" value="UniProtKB-UniRule"/>
</dbReference>
<dbReference type="GO" id="GO:0000287">
    <property type="term" value="F:magnesium ion binding"/>
    <property type="evidence" value="ECO:0007669"/>
    <property type="project" value="UniProtKB-UniRule"/>
</dbReference>
<dbReference type="GO" id="GO:0030388">
    <property type="term" value="P:fructose 1,6-bisphosphate metabolic process"/>
    <property type="evidence" value="ECO:0007669"/>
    <property type="project" value="TreeGrafter"/>
</dbReference>
<dbReference type="GO" id="GO:0006002">
    <property type="term" value="P:fructose 6-phosphate metabolic process"/>
    <property type="evidence" value="ECO:0007669"/>
    <property type="project" value="TreeGrafter"/>
</dbReference>
<dbReference type="GO" id="GO:0006000">
    <property type="term" value="P:fructose metabolic process"/>
    <property type="evidence" value="ECO:0007669"/>
    <property type="project" value="TreeGrafter"/>
</dbReference>
<dbReference type="GO" id="GO:0006094">
    <property type="term" value="P:gluconeogenesis"/>
    <property type="evidence" value="ECO:0007669"/>
    <property type="project" value="UniProtKB-UniRule"/>
</dbReference>
<dbReference type="GO" id="GO:0005986">
    <property type="term" value="P:sucrose biosynthetic process"/>
    <property type="evidence" value="ECO:0007669"/>
    <property type="project" value="TreeGrafter"/>
</dbReference>
<dbReference type="CDD" id="cd00354">
    <property type="entry name" value="FBPase"/>
    <property type="match status" value="1"/>
</dbReference>
<dbReference type="FunFam" id="3.30.540.10:FF:000006">
    <property type="entry name" value="Fructose-1,6-bisphosphatase class 1"/>
    <property type="match status" value="1"/>
</dbReference>
<dbReference type="FunFam" id="3.40.190.80:FF:000011">
    <property type="entry name" value="Fructose-1,6-bisphosphatase class 1"/>
    <property type="match status" value="1"/>
</dbReference>
<dbReference type="Gene3D" id="3.40.190.80">
    <property type="match status" value="1"/>
</dbReference>
<dbReference type="Gene3D" id="3.30.540.10">
    <property type="entry name" value="Fructose-1,6-Bisphosphatase, subunit A, domain 1"/>
    <property type="match status" value="1"/>
</dbReference>
<dbReference type="HAMAP" id="MF_01855">
    <property type="entry name" value="FBPase_class1"/>
    <property type="match status" value="1"/>
</dbReference>
<dbReference type="InterPro" id="IPR044015">
    <property type="entry name" value="FBPase_C_dom"/>
</dbReference>
<dbReference type="InterPro" id="IPR000146">
    <property type="entry name" value="FBPase_class-1"/>
</dbReference>
<dbReference type="InterPro" id="IPR033391">
    <property type="entry name" value="FBPase_N"/>
</dbReference>
<dbReference type="InterPro" id="IPR028343">
    <property type="entry name" value="FBPtase"/>
</dbReference>
<dbReference type="NCBIfam" id="NF006778">
    <property type="entry name" value="PRK09293.1-1"/>
    <property type="match status" value="1"/>
</dbReference>
<dbReference type="NCBIfam" id="NF006779">
    <property type="entry name" value="PRK09293.1-3"/>
    <property type="match status" value="1"/>
</dbReference>
<dbReference type="NCBIfam" id="NF006780">
    <property type="entry name" value="PRK09293.1-4"/>
    <property type="match status" value="1"/>
</dbReference>
<dbReference type="PANTHER" id="PTHR11556">
    <property type="entry name" value="FRUCTOSE-1,6-BISPHOSPHATASE-RELATED"/>
    <property type="match status" value="1"/>
</dbReference>
<dbReference type="PANTHER" id="PTHR11556:SF35">
    <property type="entry name" value="SEDOHEPTULOSE-1,7-BISPHOSPHATASE, CHLOROPLASTIC"/>
    <property type="match status" value="1"/>
</dbReference>
<dbReference type="Pfam" id="PF00316">
    <property type="entry name" value="FBPase"/>
    <property type="match status" value="1"/>
</dbReference>
<dbReference type="Pfam" id="PF18913">
    <property type="entry name" value="FBPase_C"/>
    <property type="match status" value="1"/>
</dbReference>
<dbReference type="PIRSF" id="PIRSF500210">
    <property type="entry name" value="FBPtase"/>
    <property type="match status" value="1"/>
</dbReference>
<dbReference type="PIRSF" id="PIRSF000904">
    <property type="entry name" value="FBPtase_SBPase"/>
    <property type="match status" value="1"/>
</dbReference>
<dbReference type="PRINTS" id="PR00115">
    <property type="entry name" value="F16BPHPHTASE"/>
</dbReference>
<dbReference type="SUPFAM" id="SSF56655">
    <property type="entry name" value="Carbohydrate phosphatase"/>
    <property type="match status" value="1"/>
</dbReference>
<feature type="chain" id="PRO_0000364506" description="Fructose-1,6-bisphosphatase class 1 1">
    <location>
        <begin position="1"/>
        <end position="338"/>
    </location>
</feature>
<feature type="binding site" evidence="1">
    <location>
        <position position="94"/>
    </location>
    <ligand>
        <name>Mg(2+)</name>
        <dbReference type="ChEBI" id="CHEBI:18420"/>
        <label>1</label>
    </ligand>
</feature>
<feature type="binding site" evidence="1">
    <location>
        <position position="116"/>
    </location>
    <ligand>
        <name>Mg(2+)</name>
        <dbReference type="ChEBI" id="CHEBI:18420"/>
        <label>1</label>
    </ligand>
</feature>
<feature type="binding site" evidence="1">
    <location>
        <position position="116"/>
    </location>
    <ligand>
        <name>Mg(2+)</name>
        <dbReference type="ChEBI" id="CHEBI:18420"/>
        <label>2</label>
    </ligand>
</feature>
<feature type="binding site" evidence="1">
    <location>
        <position position="118"/>
    </location>
    <ligand>
        <name>Mg(2+)</name>
        <dbReference type="ChEBI" id="CHEBI:18420"/>
        <label>1</label>
    </ligand>
</feature>
<feature type="binding site" evidence="1">
    <location>
        <begin position="119"/>
        <end position="122"/>
    </location>
    <ligand>
        <name>substrate</name>
    </ligand>
</feature>
<feature type="binding site" evidence="1">
    <location>
        <position position="119"/>
    </location>
    <ligand>
        <name>Mg(2+)</name>
        <dbReference type="ChEBI" id="CHEBI:18420"/>
        <label>2</label>
    </ligand>
</feature>
<feature type="binding site" evidence="1">
    <location>
        <position position="210"/>
    </location>
    <ligand>
        <name>substrate</name>
    </ligand>
</feature>
<feature type="binding site" evidence="1">
    <location>
        <position position="276"/>
    </location>
    <ligand>
        <name>substrate</name>
    </ligand>
</feature>
<feature type="binding site" evidence="1">
    <location>
        <position position="282"/>
    </location>
    <ligand>
        <name>Mg(2+)</name>
        <dbReference type="ChEBI" id="CHEBI:18420"/>
        <label>2</label>
    </ligand>
</feature>
<protein>
    <recommendedName>
        <fullName evidence="1">Fructose-1,6-bisphosphatase class 1 1</fullName>
        <shortName evidence="1">FBPase class 1 1</shortName>
        <ecNumber evidence="1">3.1.3.11</ecNumber>
    </recommendedName>
    <alternativeName>
        <fullName evidence="1">D-fructose-1,6-bisphosphate 1-phosphohydrolase class 1 1</fullName>
    </alternativeName>
</protein>
<proteinExistence type="inferred from homology"/>